<proteinExistence type="evidence at transcript level"/>
<reference key="1">
    <citation type="journal article" date="2000" name="Biochem. J.">
        <title>A novel transcriptional factor with Ser/Thr kinase activity involved in the transforming growth factor (TGF)-beta signalling pathway.</title>
        <authorList>
            <person name="Ohta S."/>
            <person name="Takeuchi M."/>
            <person name="Deguchi M."/>
            <person name="Tsuji T."/>
            <person name="Gahara Y."/>
            <person name="Nagata K."/>
        </authorList>
    </citation>
    <scope>NUCLEOTIDE SEQUENCE [MRNA]</scope>
    <scope>POSSIBLE FUNCTION</scope>
    <scope>TISSUE SPECIFICITY</scope>
    <scope>INDUCTION</scope>
</reference>
<name>STK16_RAT</name>
<protein>
    <recommendedName>
        <fullName>Serine/threonine-protein kinase 16</fullName>
        <ecNumber>2.7.11.1</ecNumber>
    </recommendedName>
    <alternativeName>
        <fullName>Myristoylated and palmitoylated serine/threonine-protein kinase</fullName>
        <shortName>MPSK</shortName>
    </alternativeName>
    <alternativeName>
        <fullName>Protein kinase PKL12</fullName>
    </alternativeName>
    <alternativeName>
        <fullName>TGF-beta-stimulated factor 1</fullName>
        <shortName>TSF-1</shortName>
    </alternativeName>
    <alternativeName>
        <fullName>Tyrosine-protein kinase STK16</fullName>
        <ecNumber>2.7.10.2</ecNumber>
    </alternativeName>
</protein>
<sequence length="305" mass="34409">MGHALCVCSRGTVIIDNKRYLFVQKLGEGGFSYVDLVEGLHDGHFYALKRILCHEQQDQEEAQREADMHRLFQHPNILRLMAYSLKERGAKHEAWLLLPFFKRGTLWNEIERLKDQGNFLTEDQILPLLLGICRGLEAIHAKGYAHRDLKPTNILLGDEGQPVLMDLGSMNQACIQVEGSRQALALQDWAAQRCTISYRAPELFSVQSHCVIDERTDVWSLGCVLYAMMFGEGPYDMVFQKGDSVALAVQNDLSIPQSPRHSSALRQLLASMMTVDPQQRPHIPVLLSQLEALQPPAPGQHTTQI</sequence>
<comment type="function">
    <text evidence="1">Membrane-associated protein kinase that phosphorylates on serine and threonine residues. In vitro substrates include DRG1, ENO1 and EIF4EBP1. Also autophosphorylates (By similarity). May be involved in secretory vesicle trafficking or intracellular signaling. May have a role in regulating stromal-epithelial interactions that occur during ductal morphogenesis in the mammary gland. May be involved in TGF-beta signaling. Able to autophosphorylate on Tyr residue; it is however unclear whether it has tyrosine-protein kinase toward other proteins.</text>
</comment>
<comment type="catalytic activity">
    <reaction>
        <text>L-seryl-[protein] + ATP = O-phospho-L-seryl-[protein] + ADP + H(+)</text>
        <dbReference type="Rhea" id="RHEA:17989"/>
        <dbReference type="Rhea" id="RHEA-COMP:9863"/>
        <dbReference type="Rhea" id="RHEA-COMP:11604"/>
        <dbReference type="ChEBI" id="CHEBI:15378"/>
        <dbReference type="ChEBI" id="CHEBI:29999"/>
        <dbReference type="ChEBI" id="CHEBI:30616"/>
        <dbReference type="ChEBI" id="CHEBI:83421"/>
        <dbReference type="ChEBI" id="CHEBI:456216"/>
        <dbReference type="EC" id="2.7.11.1"/>
    </reaction>
</comment>
<comment type="catalytic activity">
    <reaction>
        <text>L-threonyl-[protein] + ATP = O-phospho-L-threonyl-[protein] + ADP + H(+)</text>
        <dbReference type="Rhea" id="RHEA:46608"/>
        <dbReference type="Rhea" id="RHEA-COMP:11060"/>
        <dbReference type="Rhea" id="RHEA-COMP:11605"/>
        <dbReference type="ChEBI" id="CHEBI:15378"/>
        <dbReference type="ChEBI" id="CHEBI:30013"/>
        <dbReference type="ChEBI" id="CHEBI:30616"/>
        <dbReference type="ChEBI" id="CHEBI:61977"/>
        <dbReference type="ChEBI" id="CHEBI:456216"/>
        <dbReference type="EC" id="2.7.11.1"/>
    </reaction>
</comment>
<comment type="catalytic activity">
    <reaction evidence="4">
        <text>L-tyrosyl-[protein] + ATP = O-phospho-L-tyrosyl-[protein] + ADP + H(+)</text>
        <dbReference type="Rhea" id="RHEA:10596"/>
        <dbReference type="Rhea" id="RHEA-COMP:10136"/>
        <dbReference type="Rhea" id="RHEA-COMP:20101"/>
        <dbReference type="ChEBI" id="CHEBI:15378"/>
        <dbReference type="ChEBI" id="CHEBI:30616"/>
        <dbReference type="ChEBI" id="CHEBI:46858"/>
        <dbReference type="ChEBI" id="CHEBI:61978"/>
        <dbReference type="ChEBI" id="CHEBI:456216"/>
        <dbReference type="EC" id="2.7.10.2"/>
    </reaction>
</comment>
<comment type="subunit">
    <text evidence="1">Monomer. Interacts with DRG1 (via its N-terminal); the interaction phosphorylates DRG1.</text>
</comment>
<comment type="subcellular location">
    <subcellularLocation>
        <location>Cytoplasm</location>
        <location>Perinuclear region</location>
    </subcellularLocation>
    <subcellularLocation>
        <location evidence="1">Membrane</location>
        <topology evidence="1">Lipid-anchor</topology>
    </subcellularLocation>
    <text evidence="1">Associates with Golgi and Golgi-derived vesicles.</text>
</comment>
<comment type="tissue specificity">
    <text evidence="5">Expressed in heart, liver, brain, spleen, lung, skeletal muscle, kidney and testis.</text>
</comment>
<comment type="induction">
    <text evidence="5">By TGF-beta.</text>
</comment>
<comment type="PTM">
    <text evidence="1">Mainly autophosphorylated on serine/threonine residues. Also autophosphorylated on Tyr-198 (By similarity).</text>
</comment>
<comment type="similarity">
    <text evidence="3">Belongs to the protein kinase superfamily. Ser/Thr protein kinase family.</text>
</comment>
<accession>P57760</accession>
<gene>
    <name type="primary">Stk16</name>
    <name type="synonym">Mpsk1</name>
    <name type="synonym">Tsf1</name>
</gene>
<feature type="initiator methionine" description="Removed" evidence="2">
    <location>
        <position position="1"/>
    </location>
</feature>
<feature type="chain" id="PRO_0000086703" description="Serine/threonine-protein kinase 16">
    <location>
        <begin position="2"/>
        <end position="305"/>
    </location>
</feature>
<feature type="domain" description="Protein kinase" evidence="3">
    <location>
        <begin position="20"/>
        <end position="293"/>
    </location>
</feature>
<feature type="region of interest" description="Activation loop" evidence="1">
    <location>
        <begin position="166"/>
        <end position="202"/>
    </location>
</feature>
<feature type="active site" description="Proton acceptor" evidence="3 4">
    <location>
        <position position="148"/>
    </location>
</feature>
<feature type="binding site" evidence="3">
    <location>
        <begin position="26"/>
        <end position="34"/>
    </location>
    <ligand>
        <name>ATP</name>
        <dbReference type="ChEBI" id="CHEBI:30616"/>
    </ligand>
</feature>
<feature type="binding site" evidence="3">
    <location>
        <position position="49"/>
    </location>
    <ligand>
        <name>ATP</name>
        <dbReference type="ChEBI" id="CHEBI:30616"/>
    </ligand>
</feature>
<feature type="modified residue" description="Phosphoserine; by autocatalysis" evidence="2">
    <location>
        <position position="197"/>
    </location>
</feature>
<feature type="modified residue" description="Phosphotyrosine; by autocatalysis" evidence="2">
    <location>
        <position position="198"/>
    </location>
</feature>
<feature type="lipid moiety-binding region" description="N-myristoyl glycine" evidence="1">
    <location>
        <position position="2"/>
    </location>
</feature>
<feature type="lipid moiety-binding region" description="S-palmitoyl cysteine" evidence="1">
    <location>
        <position position="6"/>
    </location>
</feature>
<feature type="lipid moiety-binding region" description="S-palmitoyl cysteine" evidence="1">
    <location>
        <position position="8"/>
    </location>
</feature>
<dbReference type="EC" id="2.7.11.1"/>
<dbReference type="EC" id="2.7.10.2"/>
<dbReference type="EMBL" id="D86220">
    <property type="protein sequence ID" value="BAB16310.1"/>
    <property type="molecule type" value="mRNA"/>
</dbReference>
<dbReference type="RefSeq" id="NP_775165.1">
    <property type="nucleotide sequence ID" value="NM_173142.1"/>
</dbReference>
<dbReference type="SMR" id="P57760"/>
<dbReference type="FunCoup" id="P57760">
    <property type="interactions" value="2825"/>
</dbReference>
<dbReference type="STRING" id="10116.ENSRNOP00000026194"/>
<dbReference type="iPTMnet" id="P57760"/>
<dbReference type="PhosphoSitePlus" id="P57760"/>
<dbReference type="PaxDb" id="10116-ENSRNOP00000026194"/>
<dbReference type="Ensembl" id="ENSRNOT00000026194.4">
    <property type="protein sequence ID" value="ENSRNOP00000026194.3"/>
    <property type="gene ID" value="ENSRNOG00000019294.4"/>
</dbReference>
<dbReference type="GeneID" id="286927"/>
<dbReference type="KEGG" id="rno:286927"/>
<dbReference type="UCSC" id="RGD:629474">
    <property type="organism name" value="rat"/>
</dbReference>
<dbReference type="AGR" id="RGD:629474"/>
<dbReference type="CTD" id="8576"/>
<dbReference type="RGD" id="629474">
    <property type="gene designation" value="Stk16"/>
</dbReference>
<dbReference type="eggNOG" id="KOG2345">
    <property type="taxonomic scope" value="Eukaryota"/>
</dbReference>
<dbReference type="GeneTree" id="ENSGT00550000075037"/>
<dbReference type="HOGENOM" id="CLU_000288_109_2_1"/>
<dbReference type="InParanoid" id="P57760"/>
<dbReference type="OMA" id="AMHQYKV"/>
<dbReference type="OrthoDB" id="248923at2759"/>
<dbReference type="PhylomeDB" id="P57760"/>
<dbReference type="TreeFam" id="TF350433"/>
<dbReference type="BRENDA" id="2.7.11.1">
    <property type="organism ID" value="5301"/>
</dbReference>
<dbReference type="PRO" id="PR:P57760"/>
<dbReference type="Proteomes" id="UP000002494">
    <property type="component" value="Chromosome 9"/>
</dbReference>
<dbReference type="Bgee" id="ENSRNOG00000019294">
    <property type="expression patterns" value="Expressed in stomach and 19 other cell types or tissues"/>
</dbReference>
<dbReference type="GO" id="GO:0005737">
    <property type="term" value="C:cytoplasm"/>
    <property type="evidence" value="ECO:0000318"/>
    <property type="project" value="GO_Central"/>
</dbReference>
<dbReference type="GO" id="GO:0005829">
    <property type="term" value="C:cytosol"/>
    <property type="evidence" value="ECO:0007669"/>
    <property type="project" value="Ensembl"/>
</dbReference>
<dbReference type="GO" id="GO:0005794">
    <property type="term" value="C:Golgi apparatus"/>
    <property type="evidence" value="ECO:0000266"/>
    <property type="project" value="RGD"/>
</dbReference>
<dbReference type="GO" id="GO:0005798">
    <property type="term" value="C:Golgi-associated vesicle"/>
    <property type="evidence" value="ECO:0000266"/>
    <property type="project" value="RGD"/>
</dbReference>
<dbReference type="GO" id="GO:0016604">
    <property type="term" value="C:nuclear body"/>
    <property type="evidence" value="ECO:0007669"/>
    <property type="project" value="Ensembl"/>
</dbReference>
<dbReference type="GO" id="GO:0048471">
    <property type="term" value="C:perinuclear region of cytoplasm"/>
    <property type="evidence" value="ECO:0007669"/>
    <property type="project" value="UniProtKB-SubCell"/>
</dbReference>
<dbReference type="GO" id="GO:0005886">
    <property type="term" value="C:plasma membrane"/>
    <property type="evidence" value="ECO:0007669"/>
    <property type="project" value="Ensembl"/>
</dbReference>
<dbReference type="GO" id="GO:0005524">
    <property type="term" value="F:ATP binding"/>
    <property type="evidence" value="ECO:0007669"/>
    <property type="project" value="UniProtKB-KW"/>
</dbReference>
<dbReference type="GO" id="GO:0004715">
    <property type="term" value="F:non-membrane spanning protein tyrosine kinase activity"/>
    <property type="evidence" value="ECO:0007669"/>
    <property type="project" value="UniProtKB-EC"/>
</dbReference>
<dbReference type="GO" id="GO:0004672">
    <property type="term" value="F:protein kinase activity"/>
    <property type="evidence" value="ECO:0000314"/>
    <property type="project" value="RGD"/>
</dbReference>
<dbReference type="GO" id="GO:0106310">
    <property type="term" value="F:protein serine kinase activity"/>
    <property type="evidence" value="ECO:0007669"/>
    <property type="project" value="RHEA"/>
</dbReference>
<dbReference type="GO" id="GO:0004674">
    <property type="term" value="F:protein serine/threonine kinase activity"/>
    <property type="evidence" value="ECO:0000266"/>
    <property type="project" value="RGD"/>
</dbReference>
<dbReference type="GO" id="GO:0000978">
    <property type="term" value="F:RNA polymerase II cis-regulatory region sequence-specific DNA binding"/>
    <property type="evidence" value="ECO:0000314"/>
    <property type="project" value="RGD"/>
</dbReference>
<dbReference type="GO" id="GO:0071560">
    <property type="term" value="P:cellular response to transforming growth factor beta stimulus"/>
    <property type="evidence" value="ECO:0000314"/>
    <property type="project" value="RGD"/>
</dbReference>
<dbReference type="GO" id="GO:0045944">
    <property type="term" value="P:positive regulation of transcription by RNA polymerase II"/>
    <property type="evidence" value="ECO:0000314"/>
    <property type="project" value="RGD"/>
</dbReference>
<dbReference type="CDD" id="cd13986">
    <property type="entry name" value="STKc_16"/>
    <property type="match status" value="1"/>
</dbReference>
<dbReference type="FunFam" id="1.10.510.10:FF:000396">
    <property type="entry name" value="Serine/threonine-protein kinase 16"/>
    <property type="match status" value="1"/>
</dbReference>
<dbReference type="FunFam" id="3.30.200.20:FF:000297">
    <property type="entry name" value="serine/threonine-protein kinase 16"/>
    <property type="match status" value="1"/>
</dbReference>
<dbReference type="Gene3D" id="3.30.200.20">
    <property type="entry name" value="Phosphorylase Kinase, domain 1"/>
    <property type="match status" value="1"/>
</dbReference>
<dbReference type="Gene3D" id="1.10.510.10">
    <property type="entry name" value="Transferase(Phosphotransferase) domain 1"/>
    <property type="match status" value="1"/>
</dbReference>
<dbReference type="InterPro" id="IPR011009">
    <property type="entry name" value="Kinase-like_dom_sf"/>
</dbReference>
<dbReference type="InterPro" id="IPR000719">
    <property type="entry name" value="Prot_kinase_dom"/>
</dbReference>
<dbReference type="InterPro" id="IPR052239">
    <property type="entry name" value="Ser/Thr-specific_kinases"/>
</dbReference>
<dbReference type="InterPro" id="IPR008271">
    <property type="entry name" value="Ser/Thr_kinase_AS"/>
</dbReference>
<dbReference type="PANTHER" id="PTHR45998">
    <property type="entry name" value="SERINE/THREONINE-PROTEIN KINASE 16"/>
    <property type="match status" value="1"/>
</dbReference>
<dbReference type="PANTHER" id="PTHR45998:SF2">
    <property type="entry name" value="SERINE_THREONINE-PROTEIN KINASE 16"/>
    <property type="match status" value="1"/>
</dbReference>
<dbReference type="Pfam" id="PF00069">
    <property type="entry name" value="Pkinase"/>
    <property type="match status" value="1"/>
</dbReference>
<dbReference type="PIRSF" id="PIRSF000654">
    <property type="entry name" value="Integrin-linked_kinase"/>
    <property type="match status" value="1"/>
</dbReference>
<dbReference type="SMART" id="SM00220">
    <property type="entry name" value="S_TKc"/>
    <property type="match status" value="1"/>
</dbReference>
<dbReference type="SUPFAM" id="SSF56112">
    <property type="entry name" value="Protein kinase-like (PK-like)"/>
    <property type="match status" value="1"/>
</dbReference>
<dbReference type="PROSITE" id="PS50011">
    <property type="entry name" value="PROTEIN_KINASE_DOM"/>
    <property type="match status" value="1"/>
</dbReference>
<dbReference type="PROSITE" id="PS00108">
    <property type="entry name" value="PROTEIN_KINASE_ST"/>
    <property type="match status" value="1"/>
</dbReference>
<organism>
    <name type="scientific">Rattus norvegicus</name>
    <name type="common">Rat</name>
    <dbReference type="NCBI Taxonomy" id="10116"/>
    <lineage>
        <taxon>Eukaryota</taxon>
        <taxon>Metazoa</taxon>
        <taxon>Chordata</taxon>
        <taxon>Craniata</taxon>
        <taxon>Vertebrata</taxon>
        <taxon>Euteleostomi</taxon>
        <taxon>Mammalia</taxon>
        <taxon>Eutheria</taxon>
        <taxon>Euarchontoglires</taxon>
        <taxon>Glires</taxon>
        <taxon>Rodentia</taxon>
        <taxon>Myomorpha</taxon>
        <taxon>Muroidea</taxon>
        <taxon>Muridae</taxon>
        <taxon>Murinae</taxon>
        <taxon>Rattus</taxon>
    </lineage>
</organism>
<evidence type="ECO:0000250" key="1"/>
<evidence type="ECO:0000250" key="2">
    <source>
        <dbReference type="UniProtKB" id="O75716"/>
    </source>
</evidence>
<evidence type="ECO:0000255" key="3">
    <source>
        <dbReference type="PROSITE-ProRule" id="PRU00159"/>
    </source>
</evidence>
<evidence type="ECO:0000255" key="4">
    <source>
        <dbReference type="PROSITE-ProRule" id="PRU10027"/>
    </source>
</evidence>
<evidence type="ECO:0000269" key="5">
    <source>
    </source>
</evidence>
<keyword id="KW-0067">ATP-binding</keyword>
<keyword id="KW-0963">Cytoplasm</keyword>
<keyword id="KW-0418">Kinase</keyword>
<keyword id="KW-0449">Lipoprotein</keyword>
<keyword id="KW-0472">Membrane</keyword>
<keyword id="KW-0519">Myristate</keyword>
<keyword id="KW-0547">Nucleotide-binding</keyword>
<keyword id="KW-0564">Palmitate</keyword>
<keyword id="KW-0597">Phosphoprotein</keyword>
<keyword id="KW-1185">Reference proteome</keyword>
<keyword id="KW-0723">Serine/threonine-protein kinase</keyword>
<keyword id="KW-0808">Transferase</keyword>